<geneLocation type="mitochondrion"/>
<keyword id="KW-0007">Acetylation</keyword>
<keyword id="KW-0066">ATP synthesis</keyword>
<keyword id="KW-0138">CF(0)</keyword>
<keyword id="KW-0375">Hydrogen ion transport</keyword>
<keyword id="KW-0406">Ion transport</keyword>
<keyword id="KW-0472">Membrane</keyword>
<keyword id="KW-0496">Mitochondrion</keyword>
<keyword id="KW-1185">Reference proteome</keyword>
<keyword id="KW-0812">Transmembrane</keyword>
<keyword id="KW-1133">Transmembrane helix</keyword>
<keyword id="KW-0813">Transport</keyword>
<gene>
    <name evidence="1" type="primary">MT-ATP8</name>
    <name type="synonym">ATP8</name>
    <name type="synonym">ATPASE8</name>
    <name type="synonym">MTATP8</name>
</gene>
<name>ATP8_BALMU</name>
<feature type="chain" id="PRO_0000195492" description="ATP synthase F(0) complex subunit 8">
    <location>
        <begin position="1"/>
        <end position="63"/>
    </location>
</feature>
<feature type="transmembrane region" description="Helical" evidence="4">
    <location>
        <begin position="8"/>
        <end position="24"/>
    </location>
</feature>
<feature type="modified residue" description="N6-acetyllysine" evidence="2">
    <location>
        <position position="57"/>
    </location>
</feature>
<dbReference type="EMBL" id="X72204">
    <property type="protein sequence ID" value="CAA50999.1"/>
    <property type="molecule type" value="Genomic_DNA"/>
</dbReference>
<dbReference type="PIR" id="S41824">
    <property type="entry name" value="S41824"/>
</dbReference>
<dbReference type="RefSeq" id="NP_007060.1">
    <property type="nucleotide sequence ID" value="NC_001601.1"/>
</dbReference>
<dbReference type="SMR" id="P41292"/>
<dbReference type="GeneID" id="807735"/>
<dbReference type="KEGG" id="bmus:807735"/>
<dbReference type="CTD" id="4509"/>
<dbReference type="OrthoDB" id="9835073at2759"/>
<dbReference type="Proteomes" id="UP000694857">
    <property type="component" value="Mitochondrion MT"/>
</dbReference>
<dbReference type="GO" id="GO:0031966">
    <property type="term" value="C:mitochondrial membrane"/>
    <property type="evidence" value="ECO:0007669"/>
    <property type="project" value="UniProtKB-SubCell"/>
</dbReference>
<dbReference type="GO" id="GO:0045259">
    <property type="term" value="C:proton-transporting ATP synthase complex"/>
    <property type="evidence" value="ECO:0000250"/>
    <property type="project" value="UniProtKB"/>
</dbReference>
<dbReference type="GO" id="GO:0015078">
    <property type="term" value="F:proton transmembrane transporter activity"/>
    <property type="evidence" value="ECO:0007669"/>
    <property type="project" value="InterPro"/>
</dbReference>
<dbReference type="GO" id="GO:0015986">
    <property type="term" value="P:proton motive force-driven ATP synthesis"/>
    <property type="evidence" value="ECO:0007669"/>
    <property type="project" value="InterPro"/>
</dbReference>
<dbReference type="InterPro" id="IPR039017">
    <property type="entry name" value="ATP8_mammal"/>
</dbReference>
<dbReference type="InterPro" id="IPR001421">
    <property type="entry name" value="ATP8_metazoa"/>
</dbReference>
<dbReference type="PANTHER" id="PTHR13722">
    <property type="entry name" value="ATP SYNTHASE PROTEIN 8"/>
    <property type="match status" value="1"/>
</dbReference>
<dbReference type="PANTHER" id="PTHR13722:SF0">
    <property type="entry name" value="ATP SYNTHASE PROTEIN 8"/>
    <property type="match status" value="1"/>
</dbReference>
<dbReference type="Pfam" id="PF00895">
    <property type="entry name" value="ATP-synt_8"/>
    <property type="match status" value="1"/>
</dbReference>
<evidence type="ECO:0000250" key="1">
    <source>
        <dbReference type="UniProtKB" id="P03928"/>
    </source>
</evidence>
<evidence type="ECO:0000250" key="2">
    <source>
        <dbReference type="UniProtKB" id="P03930"/>
    </source>
</evidence>
<evidence type="ECO:0000250" key="3">
    <source>
        <dbReference type="UniProtKB" id="P19483"/>
    </source>
</evidence>
<evidence type="ECO:0000255" key="4"/>
<evidence type="ECO:0000305" key="5"/>
<proteinExistence type="inferred from homology"/>
<protein>
    <recommendedName>
        <fullName evidence="1">ATP synthase F(0) complex subunit 8</fullName>
    </recommendedName>
    <alternativeName>
        <fullName>A6L</fullName>
    </alternativeName>
    <alternativeName>
        <fullName>F-ATPase subunit 8</fullName>
    </alternativeName>
</protein>
<organism>
    <name type="scientific">Balaenoptera musculus</name>
    <name type="common">Blue whale</name>
    <dbReference type="NCBI Taxonomy" id="9771"/>
    <lineage>
        <taxon>Eukaryota</taxon>
        <taxon>Metazoa</taxon>
        <taxon>Chordata</taxon>
        <taxon>Craniata</taxon>
        <taxon>Vertebrata</taxon>
        <taxon>Euteleostomi</taxon>
        <taxon>Mammalia</taxon>
        <taxon>Eutheria</taxon>
        <taxon>Laurasiatheria</taxon>
        <taxon>Artiodactyla</taxon>
        <taxon>Whippomorpha</taxon>
        <taxon>Cetacea</taxon>
        <taxon>Mysticeti</taxon>
        <taxon>Balaenopteridae</taxon>
        <taxon>Balaenoptera</taxon>
    </lineage>
</organism>
<comment type="function">
    <text evidence="1 3">Subunit 8, of the mitochondrial membrane ATP synthase complex (F(1)F(0) ATP synthase or Complex V) that produces ATP from ADP in the presence of a proton gradient across the membrane which is generated by electron transport complexes of the respiratory chain. ATP synthase complex consist of a soluble F(1) head domain - the catalytic core - and a membrane F(1) domain - the membrane proton channel. These two domains are linked by a central stalk rotating inside the F(1) region and a stationary peripheral stalk. During catalysis, ATP synthesis in the catalytic domain of F(1) is coupled via a rotary mechanism of the central stalk subunits to proton translocation (By similarity). In vivo, can only synthesize ATP although its ATP hydrolase activity can be activated artificially in vitro (By similarity). Part of the complex F(0) domain (By similarity).</text>
</comment>
<comment type="subunit">
    <text evidence="1">Component of the ATP synthase complex composed at least of ATP5F1A/subunit alpha, ATP5F1B/subunit beta, ATP5MC1/subunit c (homooctomer), MT-ATP6/subunit a, MT-ATP8/subunit 8, ATP5ME/subunit e, ATP5MF/subunit f, ATP5MG/subunit g, ATP5MK/subunit k, ATP5MJ/subunit j, ATP5F1C/subunit gamma, ATP5F1D/subunit delta, ATP5F1E/subunit epsilon, ATP5PF/subunit F6, ATP5PB/subunit b, ATP5PD/subunit d, ATP5PO/subunit OSCP. ATP synthase complex consists of a soluble F(1) head domain (subunits alpha(3) and beta(3)) - the catalytic core - and a membrane F(0) domain - the membrane proton channel (subunits c, a, 8, e, f, g, k and j). These two domains are linked by a central stalk (subunits gamma, delta, and epsilon) rotating inside the F1 region and a stationary peripheral stalk (subunits F6, b, d, and OSCP). Interacts with PRICKLE3.</text>
</comment>
<comment type="subcellular location">
    <subcellularLocation>
        <location>Mitochondrion membrane</location>
        <topology>Single-pass membrane protein</topology>
    </subcellularLocation>
</comment>
<comment type="similarity">
    <text evidence="5">Belongs to the ATPase protein 8 family.</text>
</comment>
<accession>P41292</accession>
<sequence length="63" mass="7400">MPQLDTSTWLLTILSMLLTLFVLFQLKISKHSYSPNPKLVPTKTQKQQTPWNITWTKIYLPLL</sequence>
<reference key="1">
    <citation type="journal article" date="1993" name="J. Mol. Evol.">
        <title>Comparison between the complete mtDNA sequences of the blue and the fin whale, two species that can hybridize in nature.</title>
        <authorList>
            <person name="Arnason U."/>
            <person name="Gullberg A."/>
        </authorList>
    </citation>
    <scope>NUCLEOTIDE SEQUENCE [GENOMIC DNA]</scope>
</reference>